<accession>A9GVS4</accession>
<reference key="1">
    <citation type="journal article" date="2007" name="Nat. Biotechnol.">
        <title>Complete genome sequence of the myxobacterium Sorangium cellulosum.</title>
        <authorList>
            <person name="Schneiker S."/>
            <person name="Perlova O."/>
            <person name="Kaiser O."/>
            <person name="Gerth K."/>
            <person name="Alici A."/>
            <person name="Altmeyer M.O."/>
            <person name="Bartels D."/>
            <person name="Bekel T."/>
            <person name="Beyer S."/>
            <person name="Bode E."/>
            <person name="Bode H.B."/>
            <person name="Bolten C.J."/>
            <person name="Choudhuri J.V."/>
            <person name="Doss S."/>
            <person name="Elnakady Y.A."/>
            <person name="Frank B."/>
            <person name="Gaigalat L."/>
            <person name="Goesmann A."/>
            <person name="Groeger C."/>
            <person name="Gross F."/>
            <person name="Jelsbak L."/>
            <person name="Jelsbak L."/>
            <person name="Kalinowski J."/>
            <person name="Kegler C."/>
            <person name="Knauber T."/>
            <person name="Konietzny S."/>
            <person name="Kopp M."/>
            <person name="Krause L."/>
            <person name="Krug D."/>
            <person name="Linke B."/>
            <person name="Mahmud T."/>
            <person name="Martinez-Arias R."/>
            <person name="McHardy A.C."/>
            <person name="Merai M."/>
            <person name="Meyer F."/>
            <person name="Mormann S."/>
            <person name="Munoz-Dorado J."/>
            <person name="Perez J."/>
            <person name="Pradella S."/>
            <person name="Rachid S."/>
            <person name="Raddatz G."/>
            <person name="Rosenau F."/>
            <person name="Rueckert C."/>
            <person name="Sasse F."/>
            <person name="Scharfe M."/>
            <person name="Schuster S.C."/>
            <person name="Suen G."/>
            <person name="Treuner-Lange A."/>
            <person name="Velicer G.J."/>
            <person name="Vorholter F.-J."/>
            <person name="Weissman K.J."/>
            <person name="Welch R.D."/>
            <person name="Wenzel S.C."/>
            <person name="Whitworth D.E."/>
            <person name="Wilhelm S."/>
            <person name="Wittmann C."/>
            <person name="Bloecker H."/>
            <person name="Puehler A."/>
            <person name="Mueller R."/>
        </authorList>
    </citation>
    <scope>NUCLEOTIDE SEQUENCE [LARGE SCALE GENOMIC DNA]</scope>
    <source>
        <strain>So ce56</strain>
    </source>
</reference>
<evidence type="ECO:0000255" key="1">
    <source>
        <dbReference type="HAMAP-Rule" id="MF_00658"/>
    </source>
</evidence>
<feature type="chain" id="PRO_1000082817" description="Ribosomal RNA large subunit methyltransferase H">
    <location>
        <begin position="1"/>
        <end position="145"/>
    </location>
</feature>
<feature type="binding site" evidence="1">
    <location>
        <position position="94"/>
    </location>
    <ligand>
        <name>S-adenosyl-L-methionine</name>
        <dbReference type="ChEBI" id="CHEBI:59789"/>
    </ligand>
</feature>
<feature type="binding site" evidence="1">
    <location>
        <begin position="113"/>
        <end position="118"/>
    </location>
    <ligand>
        <name>S-adenosyl-L-methionine</name>
        <dbReference type="ChEBI" id="CHEBI:59789"/>
    </ligand>
</feature>
<organism>
    <name type="scientific">Sorangium cellulosum (strain So ce56)</name>
    <name type="common">Polyangium cellulosum (strain So ce56)</name>
    <dbReference type="NCBI Taxonomy" id="448385"/>
    <lineage>
        <taxon>Bacteria</taxon>
        <taxon>Pseudomonadati</taxon>
        <taxon>Myxococcota</taxon>
        <taxon>Polyangia</taxon>
        <taxon>Polyangiales</taxon>
        <taxon>Polyangiaceae</taxon>
        <taxon>Sorangium</taxon>
    </lineage>
</organism>
<comment type="function">
    <text evidence="1">Specifically methylates the pseudouridine at position 1915 (m3Psi1915) in 23S rRNA.</text>
</comment>
<comment type="catalytic activity">
    <reaction evidence="1">
        <text>pseudouridine(1915) in 23S rRNA + S-adenosyl-L-methionine = N(3)-methylpseudouridine(1915) in 23S rRNA + S-adenosyl-L-homocysteine + H(+)</text>
        <dbReference type="Rhea" id="RHEA:42752"/>
        <dbReference type="Rhea" id="RHEA-COMP:10221"/>
        <dbReference type="Rhea" id="RHEA-COMP:10222"/>
        <dbReference type="ChEBI" id="CHEBI:15378"/>
        <dbReference type="ChEBI" id="CHEBI:57856"/>
        <dbReference type="ChEBI" id="CHEBI:59789"/>
        <dbReference type="ChEBI" id="CHEBI:65314"/>
        <dbReference type="ChEBI" id="CHEBI:74486"/>
        <dbReference type="EC" id="2.1.1.177"/>
    </reaction>
</comment>
<comment type="subunit">
    <text evidence="1">Homodimer.</text>
</comment>
<comment type="subcellular location">
    <subcellularLocation>
        <location evidence="1">Cytoplasm</location>
    </subcellularLocation>
</comment>
<comment type="similarity">
    <text evidence="1">Belongs to the RNA methyltransferase RlmH family.</text>
</comment>
<proteinExistence type="inferred from homology"/>
<protein>
    <recommendedName>
        <fullName evidence="1">Ribosomal RNA large subunit methyltransferase H</fullName>
        <ecNumber evidence="1">2.1.1.177</ecNumber>
    </recommendedName>
    <alternativeName>
        <fullName evidence="1">23S rRNA (pseudouridine1915-N3)-methyltransferase</fullName>
    </alternativeName>
    <alternativeName>
        <fullName evidence="1">23S rRNA m3Psi1915 methyltransferase</fullName>
    </alternativeName>
    <alternativeName>
        <fullName evidence="1">rRNA (pseudouridine-N3-)-methyltransferase RlmH</fullName>
    </alternativeName>
</protein>
<name>RLMH_SORC5</name>
<keyword id="KW-0963">Cytoplasm</keyword>
<keyword id="KW-0489">Methyltransferase</keyword>
<keyword id="KW-1185">Reference proteome</keyword>
<keyword id="KW-0698">rRNA processing</keyword>
<keyword id="KW-0949">S-adenosyl-L-methionine</keyword>
<keyword id="KW-0808">Transferase</keyword>
<dbReference type="EC" id="2.1.1.177" evidence="1"/>
<dbReference type="EMBL" id="AM746676">
    <property type="protein sequence ID" value="CAN93834.1"/>
    <property type="molecule type" value="Genomic_DNA"/>
</dbReference>
<dbReference type="RefSeq" id="WP_012236304.1">
    <property type="nucleotide sequence ID" value="NC_010162.1"/>
</dbReference>
<dbReference type="SMR" id="A9GVS4"/>
<dbReference type="STRING" id="448385.sce3674"/>
<dbReference type="KEGG" id="scl:sce3674"/>
<dbReference type="eggNOG" id="COG1576">
    <property type="taxonomic scope" value="Bacteria"/>
</dbReference>
<dbReference type="HOGENOM" id="CLU_100552_1_0_7"/>
<dbReference type="OrthoDB" id="9806643at2"/>
<dbReference type="BioCyc" id="SCEL448385:SCE_RS18820-MONOMER"/>
<dbReference type="Proteomes" id="UP000002139">
    <property type="component" value="Chromosome"/>
</dbReference>
<dbReference type="GO" id="GO:0005737">
    <property type="term" value="C:cytoplasm"/>
    <property type="evidence" value="ECO:0007669"/>
    <property type="project" value="UniProtKB-SubCell"/>
</dbReference>
<dbReference type="GO" id="GO:0070038">
    <property type="term" value="F:rRNA (pseudouridine-N3-)-methyltransferase activity"/>
    <property type="evidence" value="ECO:0007669"/>
    <property type="project" value="UniProtKB-UniRule"/>
</dbReference>
<dbReference type="CDD" id="cd18081">
    <property type="entry name" value="RlmH-like"/>
    <property type="match status" value="1"/>
</dbReference>
<dbReference type="Gene3D" id="3.40.1280.10">
    <property type="match status" value="1"/>
</dbReference>
<dbReference type="HAMAP" id="MF_00658">
    <property type="entry name" value="23SrRNA_methyltr_H"/>
    <property type="match status" value="1"/>
</dbReference>
<dbReference type="InterPro" id="IPR029028">
    <property type="entry name" value="Alpha/beta_knot_MTases"/>
</dbReference>
<dbReference type="InterPro" id="IPR003742">
    <property type="entry name" value="RlmH-like"/>
</dbReference>
<dbReference type="InterPro" id="IPR029026">
    <property type="entry name" value="tRNA_m1G_MTases_N"/>
</dbReference>
<dbReference type="PANTHER" id="PTHR33603">
    <property type="entry name" value="METHYLTRANSFERASE"/>
    <property type="match status" value="1"/>
</dbReference>
<dbReference type="PANTHER" id="PTHR33603:SF1">
    <property type="entry name" value="RIBOSOMAL RNA LARGE SUBUNIT METHYLTRANSFERASE H"/>
    <property type="match status" value="1"/>
</dbReference>
<dbReference type="Pfam" id="PF02590">
    <property type="entry name" value="SPOUT_MTase"/>
    <property type="match status" value="1"/>
</dbReference>
<dbReference type="PIRSF" id="PIRSF004505">
    <property type="entry name" value="MT_bac"/>
    <property type="match status" value="1"/>
</dbReference>
<dbReference type="SUPFAM" id="SSF75217">
    <property type="entry name" value="alpha/beta knot"/>
    <property type="match status" value="1"/>
</dbReference>
<gene>
    <name evidence="1" type="primary">rlmH</name>
    <name type="ordered locus">sce3674</name>
</gene>
<sequence length="145" mass="15436">MRLVVAAVGRVKDKPLRAAMDEYLGRIRRYVACDEIEIQDGPPAKVGPLLARASAGASVIAMEVGGKALGSEAFAAGVERWGSRGKGVVAFLIGGADGLPPDVSAAADDRWSLSPLTFPHRLARLVLIEQLYRAMTLLRGEPYAH</sequence>